<dbReference type="EMBL" id="AB160985">
    <property type="protein sequence ID" value="BAD32686.1"/>
    <property type="molecule type" value="Genomic_DNA"/>
</dbReference>
<dbReference type="GO" id="GO:0009507">
    <property type="term" value="C:chloroplast"/>
    <property type="evidence" value="ECO:0007669"/>
    <property type="project" value="UniProtKB-SubCell"/>
</dbReference>
<dbReference type="GO" id="GO:0003723">
    <property type="term" value="F:RNA binding"/>
    <property type="evidence" value="ECO:0007669"/>
    <property type="project" value="UniProtKB-KW"/>
</dbReference>
<dbReference type="GO" id="GO:0006397">
    <property type="term" value="P:mRNA processing"/>
    <property type="evidence" value="ECO:0007669"/>
    <property type="project" value="UniProtKB-KW"/>
</dbReference>
<dbReference type="GO" id="GO:0008380">
    <property type="term" value="P:RNA splicing"/>
    <property type="evidence" value="ECO:0007669"/>
    <property type="project" value="UniProtKB-UniRule"/>
</dbReference>
<dbReference type="GO" id="GO:0008033">
    <property type="term" value="P:tRNA processing"/>
    <property type="evidence" value="ECO:0007669"/>
    <property type="project" value="UniProtKB-KW"/>
</dbReference>
<dbReference type="HAMAP" id="MF_01390">
    <property type="entry name" value="MatK"/>
    <property type="match status" value="1"/>
</dbReference>
<dbReference type="InterPro" id="IPR024937">
    <property type="entry name" value="Domain_X"/>
</dbReference>
<dbReference type="InterPro" id="IPR002866">
    <property type="entry name" value="Maturase_MatK"/>
</dbReference>
<dbReference type="InterPro" id="IPR024942">
    <property type="entry name" value="Maturase_MatK_N"/>
</dbReference>
<dbReference type="PANTHER" id="PTHR34811">
    <property type="entry name" value="MATURASE K"/>
    <property type="match status" value="1"/>
</dbReference>
<dbReference type="PANTHER" id="PTHR34811:SF1">
    <property type="entry name" value="MATURASE K"/>
    <property type="match status" value="1"/>
</dbReference>
<dbReference type="Pfam" id="PF01348">
    <property type="entry name" value="Intron_maturas2"/>
    <property type="match status" value="1"/>
</dbReference>
<dbReference type="Pfam" id="PF01824">
    <property type="entry name" value="MatK_N"/>
    <property type="match status" value="1"/>
</dbReference>
<comment type="function">
    <text evidence="1">Usually encoded in the trnK tRNA gene intron. Probably assists in splicing its own and other chloroplast group II introns.</text>
</comment>
<comment type="subcellular location">
    <subcellularLocation>
        <location>Plastid</location>
        <location>Chloroplast</location>
    </subcellularLocation>
</comment>
<comment type="similarity">
    <text evidence="1">Belongs to the intron maturase 2 family. MatK subfamily.</text>
</comment>
<accession>Q6BDJ4</accession>
<evidence type="ECO:0000255" key="1">
    <source>
        <dbReference type="HAMAP-Rule" id="MF_01390"/>
    </source>
</evidence>
<reference key="1">
    <citation type="submission" date="2004-01" db="EMBL/GenBank/DDBJ databases">
        <title>Phylogeny and classification of Pinus.</title>
        <authorList>
            <person name="Gernandt D."/>
            <person name="Geada-Lopez G."/>
            <person name="Liston A."/>
        </authorList>
    </citation>
    <scope>NUCLEOTIDE SEQUENCE [GENOMIC DNA]</scope>
    <source>
        <tissue>Leaf</tissue>
    </source>
</reference>
<keyword id="KW-0150">Chloroplast</keyword>
<keyword id="KW-0507">mRNA processing</keyword>
<keyword id="KW-0934">Plastid</keyword>
<keyword id="KW-0694">RNA-binding</keyword>
<keyword id="KW-0819">tRNA processing</keyword>
<sequence>MDEFHRYGKEDNSRQQCFLYPLFFQEDLYAISHDHYLDGSSSSEPMEHLSSNDQFSFLTVKRLIGQIRQQNHSIVLFVNCAPNPLADCKKSSYSESVLEGLTLVLEVPFSIRSKYSVEGMNEWKSFRSIHSIFPFLEDKFPHSNYISDARIPYSIHPEILVRTFRRLIRDAPSLHPLRSVLYEYRNSPENLQRSIIVVPRVNTRFFLFLWNYYVYECESILFSLLKRSSHSRSLAHRPFPHGTHFHRKIKHIIIFSRRNSLKSIWLLKDPKINYVRYGERSIIAIKGTHLLVKKCRYYLLLFRQCYFHLWSEPYRVCSHQLSKNCSSSLGYFLRVRMNPLFVRTKMLDELFIADLITNEFDPIVPIVPILGLLAREKFCDVSGRPISKLSWTNLTDDDILNRFDQIWRNLFHYYSGSFGRDGLYRIKYILSLSCAKTLACKHKSTIRVVRKELGPELLSKIVFKRTRFDSLPFSSKAAARSQRERIWHSDIPQINPLVNSWQKIQDLKIENLFDQ</sequence>
<geneLocation type="chloroplast"/>
<protein>
    <recommendedName>
        <fullName evidence="1">Maturase K</fullName>
    </recommendedName>
    <alternativeName>
        <fullName evidence="1">Intron maturase</fullName>
    </alternativeName>
</protein>
<organism>
    <name type="scientific">Pinus cembra</name>
    <name type="common">Swiss stone pine</name>
    <dbReference type="NCBI Taxonomy" id="58041"/>
    <lineage>
        <taxon>Eukaryota</taxon>
        <taxon>Viridiplantae</taxon>
        <taxon>Streptophyta</taxon>
        <taxon>Embryophyta</taxon>
        <taxon>Tracheophyta</taxon>
        <taxon>Spermatophyta</taxon>
        <taxon>Pinopsida</taxon>
        <taxon>Pinidae</taxon>
        <taxon>Conifers I</taxon>
        <taxon>Pinales</taxon>
        <taxon>Pinaceae</taxon>
        <taxon>Pinus</taxon>
        <taxon>Pinus subgen. Strobus</taxon>
    </lineage>
</organism>
<name>MATK_PINCE</name>
<proteinExistence type="inferred from homology"/>
<gene>
    <name evidence="1" type="primary">matK</name>
</gene>
<feature type="chain" id="PRO_0000143606" description="Maturase K">
    <location>
        <begin position="1"/>
        <end position="515"/>
    </location>
</feature>